<gene>
    <name type="primary">lpcat2</name>
    <name type="synonym">aytl1</name>
    <name type="ORF">zgc:112165</name>
</gene>
<organism>
    <name type="scientific">Danio rerio</name>
    <name type="common">Zebrafish</name>
    <name type="synonym">Brachydanio rerio</name>
    <dbReference type="NCBI Taxonomy" id="7955"/>
    <lineage>
        <taxon>Eukaryota</taxon>
        <taxon>Metazoa</taxon>
        <taxon>Chordata</taxon>
        <taxon>Craniata</taxon>
        <taxon>Vertebrata</taxon>
        <taxon>Euteleostomi</taxon>
        <taxon>Actinopterygii</taxon>
        <taxon>Neopterygii</taxon>
        <taxon>Teleostei</taxon>
        <taxon>Ostariophysi</taxon>
        <taxon>Cypriniformes</taxon>
        <taxon>Danionidae</taxon>
        <taxon>Danioninae</taxon>
        <taxon>Danio</taxon>
    </lineage>
</organism>
<feature type="chain" id="PRO_0000247063" description="Lysophosphatidylcholine acyltransferase 2">
    <location>
        <begin position="1"/>
        <end position="529"/>
    </location>
</feature>
<feature type="topological domain" description="Cytoplasmic" evidence="4">
    <location>
        <begin position="1"/>
        <end position="50"/>
    </location>
</feature>
<feature type="transmembrane region" description="Helical; Signal-anchor for type II membrane protein" evidence="4">
    <location>
        <begin position="51"/>
        <end position="71"/>
    </location>
</feature>
<feature type="topological domain" description="Lumenal" evidence="4">
    <location>
        <begin position="72"/>
        <end position="529"/>
    </location>
</feature>
<feature type="domain" description="EF-hand 1" evidence="5">
    <location>
        <begin position="373"/>
        <end position="408"/>
    </location>
</feature>
<feature type="domain" description="EF-hand 2" evidence="5">
    <location>
        <begin position="410"/>
        <end position="445"/>
    </location>
</feature>
<feature type="domain" description="EF-hand 3" evidence="5">
    <location>
        <begin position="449"/>
        <end position="480"/>
    </location>
</feature>
<feature type="short sequence motif" description="HXXXXD motif" evidence="1">
    <location>
        <begin position="128"/>
        <end position="133"/>
    </location>
</feature>
<feature type="short sequence motif" description="EGTC motif">
    <location>
        <begin position="202"/>
        <end position="205"/>
    </location>
</feature>
<feature type="binding site" evidence="5">
    <location>
        <position position="386"/>
    </location>
    <ligand>
        <name>Ca(2+)</name>
        <dbReference type="ChEBI" id="CHEBI:29108"/>
        <label>1</label>
    </ligand>
</feature>
<feature type="binding site" evidence="5">
    <location>
        <position position="388"/>
    </location>
    <ligand>
        <name>Ca(2+)</name>
        <dbReference type="ChEBI" id="CHEBI:29108"/>
        <label>1</label>
    </ligand>
</feature>
<feature type="binding site" evidence="5">
    <location>
        <position position="390"/>
    </location>
    <ligand>
        <name>Ca(2+)</name>
        <dbReference type="ChEBI" id="CHEBI:29108"/>
        <label>1</label>
    </ligand>
</feature>
<feature type="binding site" evidence="5">
    <location>
        <position position="392"/>
    </location>
    <ligand>
        <name>Ca(2+)</name>
        <dbReference type="ChEBI" id="CHEBI:29108"/>
        <label>1</label>
    </ligand>
</feature>
<feature type="binding site" evidence="5">
    <location>
        <position position="397"/>
    </location>
    <ligand>
        <name>Ca(2+)</name>
        <dbReference type="ChEBI" id="CHEBI:29108"/>
        <label>1</label>
    </ligand>
</feature>
<feature type="binding site" evidence="5">
    <location>
        <position position="423"/>
    </location>
    <ligand>
        <name>Ca(2+)</name>
        <dbReference type="ChEBI" id="CHEBI:29108"/>
        <label>2</label>
    </ligand>
</feature>
<feature type="binding site" evidence="5">
    <location>
        <position position="425"/>
    </location>
    <ligand>
        <name>Ca(2+)</name>
        <dbReference type="ChEBI" id="CHEBI:29108"/>
        <label>2</label>
    </ligand>
</feature>
<feature type="binding site" evidence="5">
    <location>
        <position position="427"/>
    </location>
    <ligand>
        <name>Ca(2+)</name>
        <dbReference type="ChEBI" id="CHEBI:29108"/>
        <label>2</label>
    </ligand>
</feature>
<feature type="binding site" evidence="5">
    <location>
        <position position="429"/>
    </location>
    <ligand>
        <name>Ca(2+)</name>
        <dbReference type="ChEBI" id="CHEBI:29108"/>
        <label>2</label>
    </ligand>
</feature>
<feature type="binding site" evidence="5">
    <location>
        <position position="434"/>
    </location>
    <ligand>
        <name>Ca(2+)</name>
        <dbReference type="ChEBI" id="CHEBI:29108"/>
        <label>2</label>
    </ligand>
</feature>
<feature type="binding site" evidence="5">
    <location>
        <position position="458"/>
    </location>
    <ligand>
        <name>Ca(2+)</name>
        <dbReference type="ChEBI" id="CHEBI:29108"/>
        <label>3</label>
    </ligand>
</feature>
<feature type="binding site" evidence="5">
    <location>
        <position position="460"/>
    </location>
    <ligand>
        <name>Ca(2+)</name>
        <dbReference type="ChEBI" id="CHEBI:29108"/>
        <label>3</label>
    </ligand>
</feature>
<feature type="binding site" evidence="5">
    <location>
        <position position="462"/>
    </location>
    <ligand>
        <name>Ca(2+)</name>
        <dbReference type="ChEBI" id="CHEBI:29108"/>
        <label>3</label>
    </ligand>
</feature>
<feature type="binding site" evidence="5">
    <location>
        <position position="464"/>
    </location>
    <ligand>
        <name>Ca(2+)</name>
        <dbReference type="ChEBI" id="CHEBI:29108"/>
        <label>3</label>
    </ligand>
</feature>
<feature type="binding site" evidence="5">
    <location>
        <position position="469"/>
    </location>
    <ligand>
        <name>Ca(2+)</name>
        <dbReference type="ChEBI" id="CHEBI:29108"/>
        <label>3</label>
    </ligand>
</feature>
<feature type="glycosylation site" description="N-linked (GlcNAc...) asparagine" evidence="4">
    <location>
        <position position="207"/>
    </location>
</feature>
<reference key="1">
    <citation type="submission" date="2005-05" db="EMBL/GenBank/DDBJ databases">
        <authorList>
            <consortium name="NIH - Zebrafish Gene Collection (ZGC) project"/>
        </authorList>
    </citation>
    <scope>NUCLEOTIDE SEQUENCE [LARGE SCALE MRNA]</scope>
    <source>
        <tissue>Larva</tissue>
    </source>
</reference>
<name>PCAT2_DANRE</name>
<keyword id="KW-0012">Acyltransferase</keyword>
<keyword id="KW-0106">Calcium</keyword>
<keyword id="KW-1003">Cell membrane</keyword>
<keyword id="KW-0256">Endoplasmic reticulum</keyword>
<keyword id="KW-0325">Glycoprotein</keyword>
<keyword id="KW-0333">Golgi apparatus</keyword>
<keyword id="KW-0444">Lipid biosynthesis</keyword>
<keyword id="KW-0551">Lipid droplet</keyword>
<keyword id="KW-0443">Lipid metabolism</keyword>
<keyword id="KW-0472">Membrane</keyword>
<keyword id="KW-0479">Metal-binding</keyword>
<keyword id="KW-0594">Phospholipid biosynthesis</keyword>
<keyword id="KW-1208">Phospholipid metabolism</keyword>
<keyword id="KW-1185">Reference proteome</keyword>
<keyword id="KW-0677">Repeat</keyword>
<keyword id="KW-0735">Signal-anchor</keyword>
<keyword id="KW-0808">Transferase</keyword>
<keyword id="KW-0812">Transmembrane</keyword>
<keyword id="KW-1133">Transmembrane helix</keyword>
<dbReference type="EC" id="2.3.1.23" evidence="2"/>
<dbReference type="EC" id="2.3.1.51" evidence="2"/>
<dbReference type="EC" id="2.3.1.25" evidence="3"/>
<dbReference type="EC" id="2.3.1.67" evidence="3"/>
<dbReference type="EMBL" id="BC095679">
    <property type="protein sequence ID" value="AAH95679.1"/>
    <property type="molecule type" value="mRNA"/>
</dbReference>
<dbReference type="RefSeq" id="NP_001018492.1">
    <property type="nucleotide sequence ID" value="NM_001020656.1"/>
</dbReference>
<dbReference type="SMR" id="Q502J0"/>
<dbReference type="FunCoup" id="Q502J0">
    <property type="interactions" value="793"/>
</dbReference>
<dbReference type="STRING" id="7955.ENSDARP00000069449"/>
<dbReference type="GlyCosmos" id="Q502J0">
    <property type="glycosylation" value="1 site, No reported glycans"/>
</dbReference>
<dbReference type="PaxDb" id="7955-ENSDARP00000069449"/>
<dbReference type="GeneID" id="553683"/>
<dbReference type="KEGG" id="dre:553683"/>
<dbReference type="AGR" id="ZFIN:ZDB-GENE-050522-229"/>
<dbReference type="CTD" id="54947"/>
<dbReference type="ZFIN" id="ZDB-GENE-050522-229">
    <property type="gene designation" value="lpcat2"/>
</dbReference>
<dbReference type="eggNOG" id="KOG4666">
    <property type="taxonomic scope" value="Eukaryota"/>
</dbReference>
<dbReference type="InParanoid" id="Q502J0"/>
<dbReference type="OrthoDB" id="272512at2759"/>
<dbReference type="PhylomeDB" id="Q502J0"/>
<dbReference type="Reactome" id="R-DRE-1482788">
    <property type="pathway name" value="Acyl chain remodelling of PC"/>
</dbReference>
<dbReference type="UniPathway" id="UPA00085"/>
<dbReference type="PRO" id="PR:Q502J0"/>
<dbReference type="Proteomes" id="UP000000437">
    <property type="component" value="Chromosome 7"/>
</dbReference>
<dbReference type="GO" id="GO:0005783">
    <property type="term" value="C:endoplasmic reticulum"/>
    <property type="evidence" value="ECO:0000318"/>
    <property type="project" value="GO_Central"/>
</dbReference>
<dbReference type="GO" id="GO:0005789">
    <property type="term" value="C:endoplasmic reticulum membrane"/>
    <property type="evidence" value="ECO:0000250"/>
    <property type="project" value="UniProtKB"/>
</dbReference>
<dbReference type="GO" id="GO:0000139">
    <property type="term" value="C:Golgi membrane"/>
    <property type="evidence" value="ECO:0007669"/>
    <property type="project" value="UniProtKB-SubCell"/>
</dbReference>
<dbReference type="GO" id="GO:0005811">
    <property type="term" value="C:lipid droplet"/>
    <property type="evidence" value="ECO:0007669"/>
    <property type="project" value="UniProtKB-SubCell"/>
</dbReference>
<dbReference type="GO" id="GO:0005886">
    <property type="term" value="C:plasma membrane"/>
    <property type="evidence" value="ECO:0007669"/>
    <property type="project" value="UniProtKB-SubCell"/>
</dbReference>
<dbReference type="GO" id="GO:0003841">
    <property type="term" value="F:1-acylglycerol-3-phosphate O-acyltransferase activity"/>
    <property type="evidence" value="ECO:0000250"/>
    <property type="project" value="UniProtKB"/>
</dbReference>
<dbReference type="GO" id="GO:0047184">
    <property type="term" value="F:1-acylglycerophosphocholine O-acyltransferase activity"/>
    <property type="evidence" value="ECO:0007669"/>
    <property type="project" value="UniProtKB-EC"/>
</dbReference>
<dbReference type="GO" id="GO:0047192">
    <property type="term" value="F:1-alkylglycerophosphocholine O-acetyltransferase activity"/>
    <property type="evidence" value="ECO:0000250"/>
    <property type="project" value="UniProtKB"/>
</dbReference>
<dbReference type="GO" id="GO:0005509">
    <property type="term" value="F:calcium ion binding"/>
    <property type="evidence" value="ECO:0007669"/>
    <property type="project" value="InterPro"/>
</dbReference>
<dbReference type="GO" id="GO:0042171">
    <property type="term" value="F:lysophosphatidic acid acyltransferase activity"/>
    <property type="evidence" value="ECO:0000318"/>
    <property type="project" value="GO_Central"/>
</dbReference>
<dbReference type="GO" id="GO:0047159">
    <property type="term" value="F:plasmalogen synthase activity"/>
    <property type="evidence" value="ECO:0007669"/>
    <property type="project" value="UniProtKB-EC"/>
</dbReference>
<dbReference type="GO" id="GO:0008654">
    <property type="term" value="P:phospholipid biosynthetic process"/>
    <property type="evidence" value="ECO:0007669"/>
    <property type="project" value="UniProtKB-KW"/>
</dbReference>
<dbReference type="CDD" id="cd00051">
    <property type="entry name" value="EFh"/>
    <property type="match status" value="2"/>
</dbReference>
<dbReference type="CDD" id="cd07991">
    <property type="entry name" value="LPLAT_LPCAT1-like"/>
    <property type="match status" value="1"/>
</dbReference>
<dbReference type="FunFam" id="1.10.238.10:FF:000001">
    <property type="entry name" value="Calmodulin 1"/>
    <property type="match status" value="1"/>
</dbReference>
<dbReference type="Gene3D" id="1.10.238.10">
    <property type="entry name" value="EF-hand"/>
    <property type="match status" value="1"/>
</dbReference>
<dbReference type="InterPro" id="IPR011992">
    <property type="entry name" value="EF-hand-dom_pair"/>
</dbReference>
<dbReference type="InterPro" id="IPR018247">
    <property type="entry name" value="EF_Hand_1_Ca_BS"/>
</dbReference>
<dbReference type="InterPro" id="IPR002048">
    <property type="entry name" value="EF_hand_dom"/>
</dbReference>
<dbReference type="InterPro" id="IPR045252">
    <property type="entry name" value="LPCAT1-like"/>
</dbReference>
<dbReference type="InterPro" id="IPR002123">
    <property type="entry name" value="Plipid/glycerol_acylTrfase"/>
</dbReference>
<dbReference type="PANTHER" id="PTHR23063:SF21">
    <property type="entry name" value="LYSOPHOSPHATIDYLCHOLINE ACYLTRANSFERASE 2"/>
    <property type="match status" value="1"/>
</dbReference>
<dbReference type="PANTHER" id="PTHR23063">
    <property type="entry name" value="PHOSPHOLIPID ACYLTRANSFERASE"/>
    <property type="match status" value="1"/>
</dbReference>
<dbReference type="Pfam" id="PF01553">
    <property type="entry name" value="Acyltransferase"/>
    <property type="match status" value="1"/>
</dbReference>
<dbReference type="Pfam" id="PF13202">
    <property type="entry name" value="EF-hand_5"/>
    <property type="match status" value="1"/>
</dbReference>
<dbReference type="Pfam" id="PF13499">
    <property type="entry name" value="EF-hand_7"/>
    <property type="match status" value="1"/>
</dbReference>
<dbReference type="SMART" id="SM00054">
    <property type="entry name" value="EFh"/>
    <property type="match status" value="3"/>
</dbReference>
<dbReference type="SMART" id="SM00563">
    <property type="entry name" value="PlsC"/>
    <property type="match status" value="1"/>
</dbReference>
<dbReference type="SUPFAM" id="SSF47473">
    <property type="entry name" value="EF-hand"/>
    <property type="match status" value="1"/>
</dbReference>
<dbReference type="SUPFAM" id="SSF69593">
    <property type="entry name" value="Glycerol-3-phosphate (1)-acyltransferase"/>
    <property type="match status" value="1"/>
</dbReference>
<dbReference type="PROSITE" id="PS00018">
    <property type="entry name" value="EF_HAND_1"/>
    <property type="match status" value="3"/>
</dbReference>
<dbReference type="PROSITE" id="PS50222">
    <property type="entry name" value="EF_HAND_2"/>
    <property type="match status" value="3"/>
</dbReference>
<comment type="function">
    <text evidence="2 3">Exhibits both acyltransferase and acetyltransferase activities (By similarity). Activity is calcium-dependent (By similarity). Catalyzes the conversion of lysophosphatidylcholine (1-acyl-sn-glycero-3-phosphocholine or LPC) into phosphatidylcholine (1,2-diacyl-sn-glycero-3-phosphocholine or PC) (By similarity). Catalyzes the conversion 1-acyl-sn-glycerol-3-phosphate (lysophosphatidic acid or LPA) into 1,2-diacyl-sn-glycerol-3-phosphate (phosphatidic acid or PA) by incorporating an acyl moiety at the sn-2 position of the glycerol backbone (By similarity). Involved in platelet-activating factor (PAF) biosynthesis by catalyzing the conversion of the PAF precursor, 1-O-alkyl-sn-glycero-3-phosphocholine (lyso-PAF) into 1-O-alkyl-2-acetyl-sn-glycero-3-phosphocholine (PAF) (By similarity).</text>
</comment>
<comment type="catalytic activity">
    <reaction evidence="2">
        <text>a 1-acyl-sn-glycero-3-phosphocholine + an acyl-CoA = a 1,2-diacyl-sn-glycero-3-phosphocholine + CoA</text>
        <dbReference type="Rhea" id="RHEA:12937"/>
        <dbReference type="ChEBI" id="CHEBI:57287"/>
        <dbReference type="ChEBI" id="CHEBI:57643"/>
        <dbReference type="ChEBI" id="CHEBI:58168"/>
        <dbReference type="ChEBI" id="CHEBI:58342"/>
        <dbReference type="EC" id="2.3.1.23"/>
    </reaction>
</comment>
<comment type="catalytic activity">
    <reaction evidence="3">
        <text>a 1-O-alkyl-sn-glycero-3-phosphocholine + acetyl-CoA = a 1-O-alkyl-2-acetyl-sn-glycero-3-phosphocholine + CoA</text>
        <dbReference type="Rhea" id="RHEA:18461"/>
        <dbReference type="ChEBI" id="CHEBI:30909"/>
        <dbReference type="ChEBI" id="CHEBI:36707"/>
        <dbReference type="ChEBI" id="CHEBI:57287"/>
        <dbReference type="ChEBI" id="CHEBI:57288"/>
        <dbReference type="EC" id="2.3.1.67"/>
    </reaction>
</comment>
<comment type="catalytic activity">
    <reaction evidence="2">
        <text>a 1-acyl-sn-glycero-3-phosphate + an acyl-CoA = a 1,2-diacyl-sn-glycero-3-phosphate + CoA</text>
        <dbReference type="Rhea" id="RHEA:19709"/>
        <dbReference type="ChEBI" id="CHEBI:57287"/>
        <dbReference type="ChEBI" id="CHEBI:57970"/>
        <dbReference type="ChEBI" id="CHEBI:58342"/>
        <dbReference type="ChEBI" id="CHEBI:58608"/>
        <dbReference type="EC" id="2.3.1.51"/>
    </reaction>
</comment>
<comment type="catalytic activity">
    <reaction evidence="3">
        <text>a 1-O-(1Z-alkenyl)-sn-glycero-3-phosphocholine + an acyl-CoA = a 1-O-(1Z-alkenyl)-2-acyl-sn-glycero-3-phosphocholine + CoA</text>
        <dbReference type="Rhea" id="RHEA:10344"/>
        <dbReference type="ChEBI" id="CHEBI:57287"/>
        <dbReference type="ChEBI" id="CHEBI:58342"/>
        <dbReference type="ChEBI" id="CHEBI:77286"/>
        <dbReference type="ChEBI" id="CHEBI:77287"/>
        <dbReference type="EC" id="2.3.1.25"/>
    </reaction>
</comment>
<comment type="catalytic activity">
    <reaction evidence="2">
        <text>1-hexadecanoyl-sn-glycero-3-phosphate + (9Z)-octadecenoyl-CoA = 1-hexadecanoyl-2-(9Z-octadecenoyl)-sn-glycero-3-phosphate + CoA</text>
        <dbReference type="Rhea" id="RHEA:33187"/>
        <dbReference type="ChEBI" id="CHEBI:57287"/>
        <dbReference type="ChEBI" id="CHEBI:57387"/>
        <dbReference type="ChEBI" id="CHEBI:57518"/>
        <dbReference type="ChEBI" id="CHEBI:64839"/>
    </reaction>
    <physiologicalReaction direction="left-to-right" evidence="2">
        <dbReference type="Rhea" id="RHEA:33188"/>
    </physiologicalReaction>
</comment>
<comment type="catalytic activity">
    <reaction evidence="2">
        <text>1-(9Z-octadecenoyl)-sn-glycero-3-phosphate + (9Z)-octadecenoyl-CoA = 1,2-di-(9Z-octadecenoyl)-sn-glycero-3-phosphate + CoA</text>
        <dbReference type="Rhea" id="RHEA:37131"/>
        <dbReference type="ChEBI" id="CHEBI:57287"/>
        <dbReference type="ChEBI" id="CHEBI:57387"/>
        <dbReference type="ChEBI" id="CHEBI:74544"/>
        <dbReference type="ChEBI" id="CHEBI:74546"/>
    </reaction>
    <physiologicalReaction direction="left-to-right" evidence="2">
        <dbReference type="Rhea" id="RHEA:37132"/>
    </physiologicalReaction>
</comment>
<comment type="catalytic activity">
    <reaction evidence="2">
        <text>1-(9Z-octadecenoyl)-sn-glycero-3-phosphate + hexadecanoyl-CoA = 1-(9Z)-octadecenoyl-2-hexadecanoyl-sn-glycero-3-phosphate + CoA</text>
        <dbReference type="Rhea" id="RHEA:37143"/>
        <dbReference type="ChEBI" id="CHEBI:57287"/>
        <dbReference type="ChEBI" id="CHEBI:57379"/>
        <dbReference type="ChEBI" id="CHEBI:74544"/>
        <dbReference type="ChEBI" id="CHEBI:74551"/>
    </reaction>
    <physiologicalReaction direction="left-to-right" evidence="2">
        <dbReference type="Rhea" id="RHEA:37144"/>
    </physiologicalReaction>
</comment>
<comment type="catalytic activity">
    <reaction evidence="2">
        <text>1-heptadecanoyl-sn-glycero-3-phosphate + (9Z)-octadecenoyl-CoA = 1-heptadecanoyl-2-(9Z)-octadecenoyl-sn-glycero-3-phosphate + CoA</text>
        <dbReference type="Rhea" id="RHEA:37151"/>
        <dbReference type="ChEBI" id="CHEBI:57287"/>
        <dbReference type="ChEBI" id="CHEBI:57387"/>
        <dbReference type="ChEBI" id="CHEBI:74554"/>
        <dbReference type="ChEBI" id="CHEBI:74556"/>
    </reaction>
    <physiologicalReaction direction="left-to-right" evidence="2">
        <dbReference type="Rhea" id="RHEA:37152"/>
    </physiologicalReaction>
</comment>
<comment type="catalytic activity">
    <reaction evidence="2">
        <text>1-octadecanoyl-sn-glycero-3-phosphate + (9Z)-octadecenoyl-CoA = 1-octadecanoyl-2-(9Z-octadecenoyl)-sn-glycero-3-phosphate + CoA</text>
        <dbReference type="Rhea" id="RHEA:37163"/>
        <dbReference type="ChEBI" id="CHEBI:57287"/>
        <dbReference type="ChEBI" id="CHEBI:57387"/>
        <dbReference type="ChEBI" id="CHEBI:74560"/>
        <dbReference type="ChEBI" id="CHEBI:74565"/>
    </reaction>
    <physiologicalReaction direction="left-to-right" evidence="2">
        <dbReference type="Rhea" id="RHEA:37164"/>
    </physiologicalReaction>
</comment>
<comment type="catalytic activity">
    <reaction evidence="2">
        <text>heptadecanoyl-CoA + 1-(9Z-octadecenoyl)-sn-glycero-3-phosphate = 1-(9Z)-octadecenoyl-2-heptadecanoyl-sn-glycero-3-phosphate + CoA</text>
        <dbReference type="Rhea" id="RHEA:37155"/>
        <dbReference type="ChEBI" id="CHEBI:57287"/>
        <dbReference type="ChEBI" id="CHEBI:74307"/>
        <dbReference type="ChEBI" id="CHEBI:74544"/>
        <dbReference type="ChEBI" id="CHEBI:74558"/>
    </reaction>
    <physiologicalReaction direction="left-to-right" evidence="2">
        <dbReference type="Rhea" id="RHEA:37156"/>
    </physiologicalReaction>
</comment>
<comment type="catalytic activity">
    <reaction evidence="2">
        <text>1-(9Z-octadecenoyl)-sn-glycero-3-phosphate + (9Z,12Z)-octadecadienoyl-CoA = 1-(9Z)-octadecenoyl-2-(9Z,12Z)-octadecadienoyl-sn-glycero-3-phosphate + CoA</text>
        <dbReference type="Rhea" id="RHEA:37159"/>
        <dbReference type="ChEBI" id="CHEBI:57287"/>
        <dbReference type="ChEBI" id="CHEBI:57383"/>
        <dbReference type="ChEBI" id="CHEBI:74544"/>
        <dbReference type="ChEBI" id="CHEBI:74563"/>
    </reaction>
    <physiologicalReaction direction="left-to-right" evidence="2">
        <dbReference type="Rhea" id="RHEA:37160"/>
    </physiologicalReaction>
</comment>
<comment type="catalytic activity">
    <reaction evidence="2">
        <text>1-(9Z-octadecenoyl)-sn-glycero-3-phosphate + tetradecanoyl-CoA = 1-(9Z)-octadecenoyl-2-tetradecanoyl-sn-glycero-3-phosphate + CoA</text>
        <dbReference type="Rhea" id="RHEA:37171"/>
        <dbReference type="ChEBI" id="CHEBI:57287"/>
        <dbReference type="ChEBI" id="CHEBI:57385"/>
        <dbReference type="ChEBI" id="CHEBI:74544"/>
        <dbReference type="ChEBI" id="CHEBI:74579"/>
    </reaction>
    <physiologicalReaction direction="left-to-right" evidence="2">
        <dbReference type="Rhea" id="RHEA:37172"/>
    </physiologicalReaction>
</comment>
<comment type="catalytic activity">
    <reaction evidence="2">
        <text>pentadecanoyl-CoA + 1-(9Z-octadecenoyl)-sn-glycero-3-phosphate = 1-(9Z)-octadecenoyl-2-pentadecanoyl-sn-glycero-3-phosphate + CoA</text>
        <dbReference type="Rhea" id="RHEA:37175"/>
        <dbReference type="ChEBI" id="CHEBI:57287"/>
        <dbReference type="ChEBI" id="CHEBI:74309"/>
        <dbReference type="ChEBI" id="CHEBI:74544"/>
        <dbReference type="ChEBI" id="CHEBI:74578"/>
    </reaction>
    <physiologicalReaction direction="left-to-right" evidence="2">
        <dbReference type="Rhea" id="RHEA:37176"/>
    </physiologicalReaction>
</comment>
<comment type="catalytic activity">
    <reaction evidence="2">
        <text>nonadecanoyl-CoA + 1-(9Z-octadecenoyl)-sn-glycero-3-phosphate = 1-(9Z)-octadecenoyl-2-nonadecanoyl-sn-glycero-3-phosphate + CoA</text>
        <dbReference type="Rhea" id="RHEA:37595"/>
        <dbReference type="ChEBI" id="CHEBI:57287"/>
        <dbReference type="ChEBI" id="CHEBI:74544"/>
        <dbReference type="ChEBI" id="CHEBI:75104"/>
        <dbReference type="ChEBI" id="CHEBI:75105"/>
    </reaction>
    <physiologicalReaction direction="left-to-right" evidence="2">
        <dbReference type="Rhea" id="RHEA:37596"/>
    </physiologicalReaction>
</comment>
<comment type="catalytic activity">
    <reaction evidence="2">
        <text>1-hexadecanoyl-sn-glycero-3-phosphocholine + (9Z)-octadecenoyl-CoA = 1-hexadecanoyl-2-(9Z-octadecenoyl)-sn-glycero-3-phosphocholine + CoA</text>
        <dbReference type="Rhea" id="RHEA:35991"/>
        <dbReference type="ChEBI" id="CHEBI:57287"/>
        <dbReference type="ChEBI" id="CHEBI:57387"/>
        <dbReference type="ChEBI" id="CHEBI:72998"/>
        <dbReference type="ChEBI" id="CHEBI:73001"/>
    </reaction>
    <physiologicalReaction direction="left-to-right" evidence="2">
        <dbReference type="Rhea" id="RHEA:35992"/>
    </physiologicalReaction>
</comment>
<comment type="catalytic activity">
    <reaction evidence="3">
        <text>1-O-hexadecyl-sn-glycero-3-phosphocholine + acetyl-CoA = 1-O-hexadecyl-2-acetyl-sn-glycero-3-phosphocholine + CoA</text>
        <dbReference type="Rhea" id="RHEA:37719"/>
        <dbReference type="ChEBI" id="CHEBI:44811"/>
        <dbReference type="ChEBI" id="CHEBI:57287"/>
        <dbReference type="ChEBI" id="CHEBI:57288"/>
        <dbReference type="ChEBI" id="CHEBI:64496"/>
    </reaction>
    <physiologicalReaction direction="left-to-right" evidence="3">
        <dbReference type="Rhea" id="RHEA:37720"/>
    </physiologicalReaction>
</comment>
<comment type="catalytic activity">
    <reaction evidence="3">
        <text>1-O-octadecyl-sn-glycero-3-phosphocholine + acetyl-CoA = 1-O-octadecyl-2-acetyl-sn-glycero-3-phosphocholine + CoA</text>
        <dbReference type="Rhea" id="RHEA:37699"/>
        <dbReference type="ChEBI" id="CHEBI:52450"/>
        <dbReference type="ChEBI" id="CHEBI:57287"/>
        <dbReference type="ChEBI" id="CHEBI:57288"/>
        <dbReference type="ChEBI" id="CHEBI:75216"/>
    </reaction>
    <physiologicalReaction direction="left-to-right" evidence="3">
        <dbReference type="Rhea" id="RHEA:37700"/>
    </physiologicalReaction>
</comment>
<comment type="catalytic activity">
    <reaction evidence="3">
        <text>1-hexadecanoyl-sn-glycero-3-phosphocholine + acetyl-CoA = 1-hexadecanoyl-2-acetyl-sn-glycero-3-phosphocholine + CoA</text>
        <dbReference type="Rhea" id="RHEA:37703"/>
        <dbReference type="ChEBI" id="CHEBI:57287"/>
        <dbReference type="ChEBI" id="CHEBI:57288"/>
        <dbReference type="ChEBI" id="CHEBI:72998"/>
        <dbReference type="ChEBI" id="CHEBI:75219"/>
    </reaction>
    <physiologicalReaction direction="left-to-right" evidence="3">
        <dbReference type="Rhea" id="RHEA:37704"/>
    </physiologicalReaction>
</comment>
<comment type="catalytic activity">
    <reaction evidence="3">
        <text>1-octadecanoyl-sn-glycero-3-phosphocholine + acetyl-CoA = 1-octadecanoyl-2-acetyl-sn-glycero-3-phosphocholine + CoA</text>
        <dbReference type="Rhea" id="RHEA:37707"/>
        <dbReference type="ChEBI" id="CHEBI:57287"/>
        <dbReference type="ChEBI" id="CHEBI:57288"/>
        <dbReference type="ChEBI" id="CHEBI:73858"/>
        <dbReference type="ChEBI" id="CHEBI:75220"/>
    </reaction>
    <physiologicalReaction direction="left-to-right" evidence="3">
        <dbReference type="Rhea" id="RHEA:37708"/>
    </physiologicalReaction>
</comment>
<comment type="catalytic activity">
    <reaction evidence="3">
        <text>a 1-O-(1Z-alkenyl)-sn-glycero-3-phosphocholine + acetyl-CoA = 1-O-(1Z)-alkenyl-2-acetyl-sn-glycero-3-phosphocholine + CoA</text>
        <dbReference type="Rhea" id="RHEA:37711"/>
        <dbReference type="ChEBI" id="CHEBI:57287"/>
        <dbReference type="ChEBI" id="CHEBI:57288"/>
        <dbReference type="ChEBI" id="CHEBI:77287"/>
        <dbReference type="ChEBI" id="CHEBI:78566"/>
    </reaction>
    <physiologicalReaction direction="left-to-right" evidence="3">
        <dbReference type="Rhea" id="RHEA:37712"/>
    </physiologicalReaction>
</comment>
<comment type="catalytic activity">
    <reaction evidence="3">
        <text>1-O-octadecyl-sn-glycero-3-phosphocholine + (5Z,8Z,11Z,14Z)-eicosatetraenoyl-CoA = 1-O-octadecyl-2-(5Z,8Z,11Z,14Z)-eicosatetraenoyl-sn-glycero-3-phosphocholine + CoA</text>
        <dbReference type="Rhea" id="RHEA:37747"/>
        <dbReference type="ChEBI" id="CHEBI:57287"/>
        <dbReference type="ChEBI" id="CHEBI:57368"/>
        <dbReference type="ChEBI" id="CHEBI:75216"/>
        <dbReference type="ChEBI" id="CHEBI:75245"/>
    </reaction>
    <physiologicalReaction direction="left-to-right" evidence="3">
        <dbReference type="Rhea" id="RHEA:37748"/>
    </physiologicalReaction>
</comment>
<comment type="pathway">
    <text>Lipid metabolism; phospholipid metabolism.</text>
</comment>
<comment type="subcellular location">
    <subcellularLocation>
        <location evidence="2">Endoplasmic reticulum membrane</location>
        <topology evidence="2">Single-pass type II membrane protein</topology>
    </subcellularLocation>
    <subcellularLocation>
        <location evidence="3">Golgi apparatus membrane</location>
        <topology evidence="2">Single-pass type II membrane protein</topology>
    </subcellularLocation>
    <subcellularLocation>
        <location evidence="3">Cell membrane</location>
        <topology evidence="2">Single-pass type II membrane protein</topology>
    </subcellularLocation>
    <subcellularLocation>
        <location evidence="2">Lipid droplet</location>
    </subcellularLocation>
</comment>
<comment type="domain">
    <text evidence="1">The HXXXXD motif is essential for acyltransferase activity.</text>
</comment>
<comment type="similarity">
    <text evidence="6">Belongs to the 1-acyl-sn-glycerol-3-phosphate acyltransferase family.</text>
</comment>
<sequence>MPPPHRVFALPRQQSLLLPAVINPFVHDLSLSTADITKCFLLGIILVPLRAIFLLLVLLVMWPVSVIITFGQSLKGVVEPMTGWRRFLHRRVMTFLGRMYFFGMGFKVVVKGKKASTLEAPILAVAPHSSFFDAIACIESGLPSTVSRIESLEAPIFGRFLRCVQPVLVSRTDPDSRRNTIIEIERRAKSGGHWPQVLIFPEGTCTNRSCLITFKQGGFVPGVPVQPVLIRYPNKLDTVTWTWQGPKSARLLLLTLCQLCTTVEVEFLPPQVPTEMEKKCPLKFAQSVRAVMAKSLKLPVTDHTYEDCRLMIAAGELTLPMEAGLVEFTKISRKLELKWDNVKKELESFANIACSCKGGRITVEEFASFLKLPISPALQQLFALFDRNGDGTIDFREYVIGVTVLCRPANNEEVIQTAFKLFDIDEDNCITQEEFSSLLRSALGVCDLDVHSLFREIDADGSGHITYDEFRSFALNHPEYAKLFTTYIELQRYQGLQGDETDFDSAFSHCCTAAYDEYQEDSASDKKDD</sequence>
<protein>
    <recommendedName>
        <fullName>Lysophosphatidylcholine acyltransferase 2</fullName>
        <shortName>LPC acyltransferase 2</shortName>
        <shortName>LPCAT-2</shortName>
        <shortName>LysoPC acyltransferase 2</shortName>
        <ecNumber evidence="2">2.3.1.23</ecNumber>
    </recommendedName>
    <alternativeName>
        <fullName>1-acylglycerol-3-phosphate O-acyltransferase 11</fullName>
        <shortName>1-AGP acyltransferase 11</shortName>
        <shortName>1-AGPAT 11</shortName>
        <ecNumber evidence="2">2.3.1.51</ecNumber>
    </alternativeName>
    <alternativeName>
        <fullName>1-acylglycerophosphocholine O-acyltransferase</fullName>
    </alternativeName>
    <alternativeName>
        <fullName>1-alkenylglycerophosphocholine O-acyltransferase</fullName>
        <ecNumber evidence="3">2.3.1.25</ecNumber>
    </alternativeName>
    <alternativeName>
        <fullName>1-alkylglycerophosphocholine O-acetyltransferase</fullName>
        <ecNumber evidence="3">2.3.1.67</ecNumber>
    </alternativeName>
    <alternativeName>
        <fullName>Acyltransferase-like 1</fullName>
    </alternativeName>
</protein>
<evidence type="ECO:0000250" key="1">
    <source>
        <dbReference type="UniProtKB" id="Q3TFD2"/>
    </source>
</evidence>
<evidence type="ECO:0000250" key="2">
    <source>
        <dbReference type="UniProtKB" id="Q7L5N7"/>
    </source>
</evidence>
<evidence type="ECO:0000250" key="3">
    <source>
        <dbReference type="UniProtKB" id="Q8BYI6"/>
    </source>
</evidence>
<evidence type="ECO:0000255" key="4"/>
<evidence type="ECO:0000255" key="5">
    <source>
        <dbReference type="PROSITE-ProRule" id="PRU00448"/>
    </source>
</evidence>
<evidence type="ECO:0000305" key="6"/>
<accession>Q502J0</accession>
<proteinExistence type="evidence at transcript level"/>